<evidence type="ECO:0000255" key="1">
    <source>
        <dbReference type="HAMAP-Rule" id="MF_00090"/>
    </source>
</evidence>
<evidence type="ECO:0000256" key="2">
    <source>
        <dbReference type="SAM" id="MobiDB-lite"/>
    </source>
</evidence>
<name>PIMT_JANMA</name>
<sequence>MTEKKRFPLSLSSIAEKAPRSGARTEVNRSSTSGKVATPQTATQNASQHGKRTITPARPAEVPRKAAAAPSSNERATPLVSEAVRKAMTARVAKQGVKDSKVLAAMDAVPRHLFMEPALASQAYIDASLPIGYHQTISQPYIVARMIEVMRNNQQGGVLNRVLEIGTGCGYQAAVLSLVAKEVYSIERIKGLHELAKANLRPMRVANIRLHYGDGMLGLPQAAPFDGIILAAAGLEVPQALLEQMTIGGRLVAPVGERHQVLQLIERVSKFEWKSSTLEDCHFVPLRPGTVT</sequence>
<accession>A6SZX9</accession>
<keyword id="KW-0963">Cytoplasm</keyword>
<keyword id="KW-0489">Methyltransferase</keyword>
<keyword id="KW-0949">S-adenosyl-L-methionine</keyword>
<keyword id="KW-0808">Transferase</keyword>
<dbReference type="EC" id="2.1.1.77" evidence="1"/>
<dbReference type="EMBL" id="CP000269">
    <property type="protein sequence ID" value="ABR89362.1"/>
    <property type="molecule type" value="Genomic_DNA"/>
</dbReference>
<dbReference type="RefSeq" id="WP_012079989.1">
    <property type="nucleotide sequence ID" value="NC_009659.1"/>
</dbReference>
<dbReference type="SMR" id="A6SZX9"/>
<dbReference type="STRING" id="375286.mma_2136"/>
<dbReference type="KEGG" id="mms:mma_2136"/>
<dbReference type="eggNOG" id="COG2518">
    <property type="taxonomic scope" value="Bacteria"/>
</dbReference>
<dbReference type="HOGENOM" id="CLU_055432_1_0_4"/>
<dbReference type="OrthoDB" id="9810066at2"/>
<dbReference type="Proteomes" id="UP000006388">
    <property type="component" value="Chromosome"/>
</dbReference>
<dbReference type="GO" id="GO:0005737">
    <property type="term" value="C:cytoplasm"/>
    <property type="evidence" value="ECO:0007669"/>
    <property type="project" value="UniProtKB-SubCell"/>
</dbReference>
<dbReference type="GO" id="GO:0004719">
    <property type="term" value="F:protein-L-isoaspartate (D-aspartate) O-methyltransferase activity"/>
    <property type="evidence" value="ECO:0007669"/>
    <property type="project" value="UniProtKB-UniRule"/>
</dbReference>
<dbReference type="GO" id="GO:0032259">
    <property type="term" value="P:methylation"/>
    <property type="evidence" value="ECO:0007669"/>
    <property type="project" value="UniProtKB-KW"/>
</dbReference>
<dbReference type="GO" id="GO:0036211">
    <property type="term" value="P:protein modification process"/>
    <property type="evidence" value="ECO:0007669"/>
    <property type="project" value="UniProtKB-UniRule"/>
</dbReference>
<dbReference type="GO" id="GO:0030091">
    <property type="term" value="P:protein repair"/>
    <property type="evidence" value="ECO:0007669"/>
    <property type="project" value="UniProtKB-UniRule"/>
</dbReference>
<dbReference type="CDD" id="cd02440">
    <property type="entry name" value="AdoMet_MTases"/>
    <property type="match status" value="1"/>
</dbReference>
<dbReference type="FunFam" id="3.40.50.150:FF:000010">
    <property type="entry name" value="Protein-L-isoaspartate O-methyltransferase"/>
    <property type="match status" value="1"/>
</dbReference>
<dbReference type="Gene3D" id="3.40.50.150">
    <property type="entry name" value="Vaccinia Virus protein VP39"/>
    <property type="match status" value="1"/>
</dbReference>
<dbReference type="HAMAP" id="MF_00090">
    <property type="entry name" value="PIMT"/>
    <property type="match status" value="1"/>
</dbReference>
<dbReference type="InterPro" id="IPR000682">
    <property type="entry name" value="PCMT"/>
</dbReference>
<dbReference type="InterPro" id="IPR029063">
    <property type="entry name" value="SAM-dependent_MTases_sf"/>
</dbReference>
<dbReference type="NCBIfam" id="TIGR00080">
    <property type="entry name" value="pimt"/>
    <property type="match status" value="1"/>
</dbReference>
<dbReference type="NCBIfam" id="NF001453">
    <property type="entry name" value="PRK00312.1"/>
    <property type="match status" value="1"/>
</dbReference>
<dbReference type="PANTHER" id="PTHR11579">
    <property type="entry name" value="PROTEIN-L-ISOASPARTATE O-METHYLTRANSFERASE"/>
    <property type="match status" value="1"/>
</dbReference>
<dbReference type="PANTHER" id="PTHR11579:SF0">
    <property type="entry name" value="PROTEIN-L-ISOASPARTATE(D-ASPARTATE) O-METHYLTRANSFERASE"/>
    <property type="match status" value="1"/>
</dbReference>
<dbReference type="Pfam" id="PF01135">
    <property type="entry name" value="PCMT"/>
    <property type="match status" value="1"/>
</dbReference>
<dbReference type="SUPFAM" id="SSF53335">
    <property type="entry name" value="S-adenosyl-L-methionine-dependent methyltransferases"/>
    <property type="match status" value="1"/>
</dbReference>
<dbReference type="PROSITE" id="PS01279">
    <property type="entry name" value="PCMT"/>
    <property type="match status" value="1"/>
</dbReference>
<comment type="function">
    <text evidence="1">Catalyzes the methyl esterification of L-isoaspartyl residues in peptides and proteins that result from spontaneous decomposition of normal L-aspartyl and L-asparaginyl residues. It plays a role in the repair and/or degradation of damaged proteins.</text>
</comment>
<comment type="catalytic activity">
    <reaction evidence="1">
        <text>[protein]-L-isoaspartate + S-adenosyl-L-methionine = [protein]-L-isoaspartate alpha-methyl ester + S-adenosyl-L-homocysteine</text>
        <dbReference type="Rhea" id="RHEA:12705"/>
        <dbReference type="Rhea" id="RHEA-COMP:12143"/>
        <dbReference type="Rhea" id="RHEA-COMP:12144"/>
        <dbReference type="ChEBI" id="CHEBI:57856"/>
        <dbReference type="ChEBI" id="CHEBI:59789"/>
        <dbReference type="ChEBI" id="CHEBI:90596"/>
        <dbReference type="ChEBI" id="CHEBI:90598"/>
        <dbReference type="EC" id="2.1.1.77"/>
    </reaction>
</comment>
<comment type="subcellular location">
    <subcellularLocation>
        <location evidence="1">Cytoplasm</location>
    </subcellularLocation>
</comment>
<comment type="similarity">
    <text evidence="1">Belongs to the methyltransferase superfamily. L-isoaspartyl/D-aspartyl protein methyltransferase family.</text>
</comment>
<protein>
    <recommendedName>
        <fullName evidence="1">Protein-L-isoaspartate O-methyltransferase</fullName>
        <ecNumber evidence="1">2.1.1.77</ecNumber>
    </recommendedName>
    <alternativeName>
        <fullName evidence="1">L-isoaspartyl protein carboxyl methyltransferase</fullName>
    </alternativeName>
    <alternativeName>
        <fullName evidence="1">Protein L-isoaspartyl methyltransferase</fullName>
    </alternativeName>
    <alternativeName>
        <fullName evidence="1">Protein-beta-aspartate methyltransferase</fullName>
        <shortName evidence="1">PIMT</shortName>
    </alternativeName>
</protein>
<organism>
    <name type="scientific">Janthinobacterium sp. (strain Marseille)</name>
    <name type="common">Minibacterium massiliensis</name>
    <dbReference type="NCBI Taxonomy" id="375286"/>
    <lineage>
        <taxon>Bacteria</taxon>
        <taxon>Pseudomonadati</taxon>
        <taxon>Pseudomonadota</taxon>
        <taxon>Betaproteobacteria</taxon>
        <taxon>Burkholderiales</taxon>
        <taxon>Oxalobacteraceae</taxon>
        <taxon>Janthinobacterium</taxon>
    </lineage>
</organism>
<gene>
    <name evidence="1" type="primary">pcm</name>
    <name type="ordered locus">mma_2136</name>
</gene>
<feature type="chain" id="PRO_0000351870" description="Protein-L-isoaspartate O-methyltransferase">
    <location>
        <begin position="1"/>
        <end position="292"/>
    </location>
</feature>
<feature type="region of interest" description="Disordered" evidence="2">
    <location>
        <begin position="1"/>
        <end position="76"/>
    </location>
</feature>
<feature type="compositionally biased region" description="Polar residues" evidence="2">
    <location>
        <begin position="28"/>
        <end position="48"/>
    </location>
</feature>
<feature type="active site" evidence="1">
    <location>
        <position position="138"/>
    </location>
</feature>
<proteinExistence type="inferred from homology"/>
<reference key="1">
    <citation type="journal article" date="2007" name="PLoS Genet.">
        <title>Genome analysis of Minibacterium massiliensis highlights the convergent evolution of water-living bacteria.</title>
        <authorList>
            <person name="Audic S."/>
            <person name="Robert C."/>
            <person name="Campagna B."/>
            <person name="Parinello H."/>
            <person name="Claverie J.-M."/>
            <person name="Raoult D."/>
            <person name="Drancourt M."/>
        </authorList>
    </citation>
    <scope>NUCLEOTIDE SEQUENCE [LARGE SCALE GENOMIC DNA]</scope>
    <source>
        <strain>Marseille</strain>
    </source>
</reference>